<reference key="1">
    <citation type="journal article" date="1997" name="Nature">
        <title>The complete genome sequence of the hyperthermophilic, sulphate-reducing archaeon Archaeoglobus fulgidus.</title>
        <authorList>
            <person name="Klenk H.-P."/>
            <person name="Clayton R.A."/>
            <person name="Tomb J.-F."/>
            <person name="White O."/>
            <person name="Nelson K.E."/>
            <person name="Ketchum K.A."/>
            <person name="Dodson R.J."/>
            <person name="Gwinn M.L."/>
            <person name="Hickey E.K."/>
            <person name="Peterson J.D."/>
            <person name="Richardson D.L."/>
            <person name="Kerlavage A.R."/>
            <person name="Graham D.E."/>
            <person name="Kyrpides N.C."/>
            <person name="Fleischmann R.D."/>
            <person name="Quackenbush J."/>
            <person name="Lee N.H."/>
            <person name="Sutton G.G."/>
            <person name="Gill S.R."/>
            <person name="Kirkness E.F."/>
            <person name="Dougherty B.A."/>
            <person name="McKenney K."/>
            <person name="Adams M.D."/>
            <person name="Loftus B.J."/>
            <person name="Peterson S.N."/>
            <person name="Reich C.I."/>
            <person name="McNeil L.K."/>
            <person name="Badger J.H."/>
            <person name="Glodek A."/>
            <person name="Zhou L."/>
            <person name="Overbeek R."/>
            <person name="Gocayne J.D."/>
            <person name="Weidman J.F."/>
            <person name="McDonald L.A."/>
            <person name="Utterback T.R."/>
            <person name="Cotton M.D."/>
            <person name="Spriggs T."/>
            <person name="Artiach P."/>
            <person name="Kaine B.P."/>
            <person name="Sykes S.M."/>
            <person name="Sadow P.W."/>
            <person name="D'Andrea K.P."/>
            <person name="Bowman C."/>
            <person name="Fujii C."/>
            <person name="Garland S.A."/>
            <person name="Mason T.M."/>
            <person name="Olsen G.J."/>
            <person name="Fraser C.M."/>
            <person name="Smith H.O."/>
            <person name="Woese C.R."/>
            <person name="Venter J.C."/>
        </authorList>
    </citation>
    <scope>NUCLEOTIDE SEQUENCE [LARGE SCALE GENOMIC DNA]</scope>
    <source>
        <strain>ATCC 49558 / DSM 4304 / JCM 9628 / NBRC 100126 / VC-16</strain>
    </source>
</reference>
<organism>
    <name type="scientific">Archaeoglobus fulgidus (strain ATCC 49558 / DSM 4304 / JCM 9628 / NBRC 100126 / VC-16)</name>
    <dbReference type="NCBI Taxonomy" id="224325"/>
    <lineage>
        <taxon>Archaea</taxon>
        <taxon>Methanobacteriati</taxon>
        <taxon>Methanobacteriota</taxon>
        <taxon>Archaeoglobi</taxon>
        <taxon>Archaeoglobales</taxon>
        <taxon>Archaeoglobaceae</taxon>
        <taxon>Archaeoglobus</taxon>
    </lineage>
</organism>
<sequence>MFLRFIEEVIKALGEYGDKKFLRESEHADLASTIAFKLAKERKKSPKEIADEIVENLEVESEYIGSVESVNGYINFFASYEFLEDTVNVILDEDENYGHLNLKGEILIEHTSANPDGPLHIGHIRNSIIGDTIARIFAKAGFDVKTHYYVNDMGRQTAITVLGIEKFGLKDKKPDHAVAEAYIEANKLLESNPELEEQVEKLMLAYEEGDEKTVEKFRRAVETALEGIKQTLKTINVEHDEFVWESEFVRNGYVGKVLGILEERGLVKKNGAWTIELEGFDKEVVLRRENGTTLYITRDLAYHMWKNENYERFINVLGADHKLYGAQLSKILELLGLKPPEIIFFEFVSLPEGSMSTRRGKFISADELISKVRDEAWKILSERDMEEDEKRKIADAVAVGAIRFDFIKIAPEKHMTFDWSKALDFERQTASYIQYSHARACSILRKAVEDGMPELEFKGELCTAGERKLVMLLSKMPYVVKRIVSELRPNVFAEYLLSVAGTFNDFYRDHPVLKAESEVRMHRLAIVDATRVVLRNGLELLGIEPLERM</sequence>
<accession>O29368</accession>
<protein>
    <recommendedName>
        <fullName>Arginine--tRNA ligase</fullName>
        <ecNumber>6.1.1.19</ecNumber>
    </recommendedName>
    <alternativeName>
        <fullName>Arginyl-tRNA synthetase</fullName>
        <shortName>ArgRS</shortName>
    </alternativeName>
</protein>
<keyword id="KW-0030">Aminoacyl-tRNA synthetase</keyword>
<keyword id="KW-0067">ATP-binding</keyword>
<keyword id="KW-0963">Cytoplasm</keyword>
<keyword id="KW-0436">Ligase</keyword>
<keyword id="KW-0547">Nucleotide-binding</keyword>
<keyword id="KW-0648">Protein biosynthesis</keyword>
<keyword id="KW-1185">Reference proteome</keyword>
<gene>
    <name type="primary">argS</name>
    <name type="ordered locus">AF_0894</name>
</gene>
<name>SYR_ARCFU</name>
<evidence type="ECO:0000250" key="1"/>
<evidence type="ECO:0000305" key="2"/>
<comment type="catalytic activity">
    <reaction>
        <text>tRNA(Arg) + L-arginine + ATP = L-arginyl-tRNA(Arg) + AMP + diphosphate</text>
        <dbReference type="Rhea" id="RHEA:20301"/>
        <dbReference type="Rhea" id="RHEA-COMP:9658"/>
        <dbReference type="Rhea" id="RHEA-COMP:9673"/>
        <dbReference type="ChEBI" id="CHEBI:30616"/>
        <dbReference type="ChEBI" id="CHEBI:32682"/>
        <dbReference type="ChEBI" id="CHEBI:33019"/>
        <dbReference type="ChEBI" id="CHEBI:78442"/>
        <dbReference type="ChEBI" id="CHEBI:78513"/>
        <dbReference type="ChEBI" id="CHEBI:456215"/>
        <dbReference type="EC" id="6.1.1.19"/>
    </reaction>
</comment>
<comment type="subcellular location">
    <subcellularLocation>
        <location evidence="1">Cytoplasm</location>
    </subcellularLocation>
</comment>
<comment type="similarity">
    <text evidence="2">Belongs to the class-I aminoacyl-tRNA synthetase family.</text>
</comment>
<dbReference type="EC" id="6.1.1.19"/>
<dbReference type="EMBL" id="AE000782">
    <property type="protein sequence ID" value="AAB90346.1"/>
    <property type="molecule type" value="Genomic_DNA"/>
</dbReference>
<dbReference type="PIR" id="F69361">
    <property type="entry name" value="F69361"/>
</dbReference>
<dbReference type="RefSeq" id="WP_010878394.1">
    <property type="nucleotide sequence ID" value="NC_000917.1"/>
</dbReference>
<dbReference type="SMR" id="O29368"/>
<dbReference type="STRING" id="224325.AF_0894"/>
<dbReference type="PaxDb" id="224325-AF_0894"/>
<dbReference type="EnsemblBacteria" id="AAB90346">
    <property type="protein sequence ID" value="AAB90346"/>
    <property type="gene ID" value="AF_0894"/>
</dbReference>
<dbReference type="GeneID" id="1484117"/>
<dbReference type="KEGG" id="afu:AF_0894"/>
<dbReference type="eggNOG" id="arCOG00487">
    <property type="taxonomic scope" value="Archaea"/>
</dbReference>
<dbReference type="HOGENOM" id="CLU_006406_6_1_2"/>
<dbReference type="OrthoDB" id="372102at2157"/>
<dbReference type="PhylomeDB" id="O29368"/>
<dbReference type="Proteomes" id="UP000002199">
    <property type="component" value="Chromosome"/>
</dbReference>
<dbReference type="GO" id="GO:0005737">
    <property type="term" value="C:cytoplasm"/>
    <property type="evidence" value="ECO:0007669"/>
    <property type="project" value="UniProtKB-SubCell"/>
</dbReference>
<dbReference type="GO" id="GO:0004814">
    <property type="term" value="F:arginine-tRNA ligase activity"/>
    <property type="evidence" value="ECO:0007669"/>
    <property type="project" value="UniProtKB-UniRule"/>
</dbReference>
<dbReference type="GO" id="GO:0005524">
    <property type="term" value="F:ATP binding"/>
    <property type="evidence" value="ECO:0007669"/>
    <property type="project" value="UniProtKB-UniRule"/>
</dbReference>
<dbReference type="GO" id="GO:0006420">
    <property type="term" value="P:arginyl-tRNA aminoacylation"/>
    <property type="evidence" value="ECO:0007669"/>
    <property type="project" value="UniProtKB-UniRule"/>
</dbReference>
<dbReference type="CDD" id="cd07956">
    <property type="entry name" value="Anticodon_Ia_Arg"/>
    <property type="match status" value="1"/>
</dbReference>
<dbReference type="CDD" id="cd00671">
    <property type="entry name" value="ArgRS_core"/>
    <property type="match status" value="1"/>
</dbReference>
<dbReference type="FunFam" id="1.10.730.10:FF:000006">
    <property type="entry name" value="Arginyl-tRNA synthetase 2, mitochondrial"/>
    <property type="match status" value="1"/>
</dbReference>
<dbReference type="Gene3D" id="3.30.1360.70">
    <property type="entry name" value="Arginyl tRNA synthetase N-terminal domain"/>
    <property type="match status" value="1"/>
</dbReference>
<dbReference type="Gene3D" id="3.40.50.620">
    <property type="entry name" value="HUPs"/>
    <property type="match status" value="1"/>
</dbReference>
<dbReference type="Gene3D" id="1.10.730.10">
    <property type="entry name" value="Isoleucyl-tRNA Synthetase, Domain 1"/>
    <property type="match status" value="1"/>
</dbReference>
<dbReference type="HAMAP" id="MF_00123">
    <property type="entry name" value="Arg_tRNA_synth"/>
    <property type="match status" value="1"/>
</dbReference>
<dbReference type="InterPro" id="IPR001278">
    <property type="entry name" value="Arg-tRNA-ligase"/>
</dbReference>
<dbReference type="InterPro" id="IPR005148">
    <property type="entry name" value="Arg-tRNA-synth_N"/>
</dbReference>
<dbReference type="InterPro" id="IPR036695">
    <property type="entry name" value="Arg-tRNA-synth_N_sf"/>
</dbReference>
<dbReference type="InterPro" id="IPR035684">
    <property type="entry name" value="ArgRS_core"/>
</dbReference>
<dbReference type="InterPro" id="IPR008909">
    <property type="entry name" value="DALR_anticod-bd"/>
</dbReference>
<dbReference type="InterPro" id="IPR014729">
    <property type="entry name" value="Rossmann-like_a/b/a_fold"/>
</dbReference>
<dbReference type="InterPro" id="IPR009080">
    <property type="entry name" value="tRNAsynth_Ia_anticodon-bd"/>
</dbReference>
<dbReference type="NCBIfam" id="TIGR00456">
    <property type="entry name" value="argS"/>
    <property type="match status" value="1"/>
</dbReference>
<dbReference type="PANTHER" id="PTHR11956:SF5">
    <property type="entry name" value="ARGININE--TRNA LIGASE, CYTOPLASMIC"/>
    <property type="match status" value="1"/>
</dbReference>
<dbReference type="PANTHER" id="PTHR11956">
    <property type="entry name" value="ARGINYL-TRNA SYNTHETASE"/>
    <property type="match status" value="1"/>
</dbReference>
<dbReference type="Pfam" id="PF03485">
    <property type="entry name" value="Arg_tRNA_synt_N"/>
    <property type="match status" value="1"/>
</dbReference>
<dbReference type="Pfam" id="PF05746">
    <property type="entry name" value="DALR_1"/>
    <property type="match status" value="1"/>
</dbReference>
<dbReference type="Pfam" id="PF00750">
    <property type="entry name" value="tRNA-synt_1d"/>
    <property type="match status" value="1"/>
</dbReference>
<dbReference type="PRINTS" id="PR01038">
    <property type="entry name" value="TRNASYNTHARG"/>
</dbReference>
<dbReference type="SMART" id="SM01016">
    <property type="entry name" value="Arg_tRNA_synt_N"/>
    <property type="match status" value="1"/>
</dbReference>
<dbReference type="SMART" id="SM00836">
    <property type="entry name" value="DALR_1"/>
    <property type="match status" value="1"/>
</dbReference>
<dbReference type="SUPFAM" id="SSF47323">
    <property type="entry name" value="Anticodon-binding domain of a subclass of class I aminoacyl-tRNA synthetases"/>
    <property type="match status" value="1"/>
</dbReference>
<dbReference type="SUPFAM" id="SSF55190">
    <property type="entry name" value="Arginyl-tRNA synthetase (ArgRS), N-terminal 'additional' domain"/>
    <property type="match status" value="1"/>
</dbReference>
<dbReference type="SUPFAM" id="SSF52374">
    <property type="entry name" value="Nucleotidylyl transferase"/>
    <property type="match status" value="1"/>
</dbReference>
<proteinExistence type="inferred from homology"/>
<feature type="chain" id="PRO_0000151643" description="Arginine--tRNA ligase">
    <location>
        <begin position="1"/>
        <end position="549"/>
    </location>
</feature>
<feature type="short sequence motif" description="'HIGH' region">
    <location>
        <begin position="113"/>
        <end position="123"/>
    </location>
</feature>